<keyword id="KW-0028">Amino-acid biosynthesis</keyword>
<keyword id="KW-0055">Arginine biosynthesis</keyword>
<keyword id="KW-0067">ATP-binding</keyword>
<keyword id="KW-0963">Cytoplasm</keyword>
<keyword id="KW-0436">Ligase</keyword>
<keyword id="KW-0547">Nucleotide-binding</keyword>
<protein>
    <recommendedName>
        <fullName evidence="1">Argininosuccinate synthase</fullName>
        <ecNumber evidence="1">6.3.4.5</ecNumber>
    </recommendedName>
    <alternativeName>
        <fullName evidence="1">Citrulline--aspartate ligase</fullName>
    </alternativeName>
</protein>
<sequence length="401" mass="44455">MKEKIVLAYSGGLDTSVAVQWLIDKGYDVVACCLDVGEGKDLDIVYKKALDMGAVECHIIDATKEFSDEYVSYAIKGNLMYENAYPLVSALSRPLIAKKLVEIAEKTNSVGIAHGCTGKGNDQVRFEVAIKALNPSLKAFAPVREWAWSREEEIDYAIKHNIPVSINHDSPYSIDQNLWGRANECGILEDPYAAPPEDAFDLTNALEETPDTADEIILTFDKGIPVQIDGKTYELDDLILTLNALAGKHGIGRIDHVENRLVGIKSREIYEAPAAEVILKAHKALETITLTKDVAHFKPIIEKQFAEQLYNGLWFSPLTDSLKLFIDSTQQYVSGDVRIKLFKGNAIVNGRKSPYTLYDEKLATYTKEDAFNQDAAVGFIDIYGLPTQVNAMLHGGYSNEQ</sequence>
<reference key="1">
    <citation type="submission" date="2007-06" db="EMBL/GenBank/DDBJ databases">
        <title>Complete sequence of chromosome of Staphylococcus aureus subsp. aureus JH1.</title>
        <authorList>
            <consortium name="US DOE Joint Genome Institute"/>
            <person name="Copeland A."/>
            <person name="Lucas S."/>
            <person name="Lapidus A."/>
            <person name="Barry K."/>
            <person name="Detter J.C."/>
            <person name="Glavina del Rio T."/>
            <person name="Hammon N."/>
            <person name="Israni S."/>
            <person name="Dalin E."/>
            <person name="Tice H."/>
            <person name="Pitluck S."/>
            <person name="Chain P."/>
            <person name="Malfatti S."/>
            <person name="Shin M."/>
            <person name="Vergez L."/>
            <person name="Schmutz J."/>
            <person name="Larimer F."/>
            <person name="Land M."/>
            <person name="Hauser L."/>
            <person name="Kyrpides N."/>
            <person name="Ivanova N."/>
            <person name="Tomasz A."/>
            <person name="Richardson P."/>
        </authorList>
    </citation>
    <scope>NUCLEOTIDE SEQUENCE [LARGE SCALE GENOMIC DNA]</scope>
    <source>
        <strain>JH1</strain>
    </source>
</reference>
<evidence type="ECO:0000255" key="1">
    <source>
        <dbReference type="HAMAP-Rule" id="MF_00005"/>
    </source>
</evidence>
<comment type="catalytic activity">
    <reaction evidence="1">
        <text>L-citrulline + L-aspartate + ATP = 2-(N(omega)-L-arginino)succinate + AMP + diphosphate + H(+)</text>
        <dbReference type="Rhea" id="RHEA:10932"/>
        <dbReference type="ChEBI" id="CHEBI:15378"/>
        <dbReference type="ChEBI" id="CHEBI:29991"/>
        <dbReference type="ChEBI" id="CHEBI:30616"/>
        <dbReference type="ChEBI" id="CHEBI:33019"/>
        <dbReference type="ChEBI" id="CHEBI:57472"/>
        <dbReference type="ChEBI" id="CHEBI:57743"/>
        <dbReference type="ChEBI" id="CHEBI:456215"/>
        <dbReference type="EC" id="6.3.4.5"/>
    </reaction>
</comment>
<comment type="pathway">
    <text evidence="1">Amino-acid biosynthesis; L-arginine biosynthesis; L-arginine from L-ornithine and carbamoyl phosphate: step 2/3.</text>
</comment>
<comment type="subunit">
    <text evidence="1">Homotetramer.</text>
</comment>
<comment type="subcellular location">
    <subcellularLocation>
        <location evidence="1">Cytoplasm</location>
    </subcellularLocation>
</comment>
<comment type="similarity">
    <text evidence="1">Belongs to the argininosuccinate synthase family. Type 1 subfamily.</text>
</comment>
<proteinExistence type="inferred from homology"/>
<organism>
    <name type="scientific">Staphylococcus aureus (strain JH1)</name>
    <dbReference type="NCBI Taxonomy" id="359787"/>
    <lineage>
        <taxon>Bacteria</taxon>
        <taxon>Bacillati</taxon>
        <taxon>Bacillota</taxon>
        <taxon>Bacilli</taxon>
        <taxon>Bacillales</taxon>
        <taxon>Staphylococcaceae</taxon>
        <taxon>Staphylococcus</taxon>
    </lineage>
</organism>
<name>ASSY_STAA2</name>
<feature type="chain" id="PRO_1000073833" description="Argininosuccinate synthase">
    <location>
        <begin position="1"/>
        <end position="401"/>
    </location>
</feature>
<feature type="binding site" evidence="1">
    <location>
        <begin position="8"/>
        <end position="16"/>
    </location>
    <ligand>
        <name>ATP</name>
        <dbReference type="ChEBI" id="CHEBI:30616"/>
    </ligand>
</feature>
<feature type="binding site" evidence="1">
    <location>
        <position position="85"/>
    </location>
    <ligand>
        <name>L-citrulline</name>
        <dbReference type="ChEBI" id="CHEBI:57743"/>
    </ligand>
</feature>
<feature type="binding site" evidence="1">
    <location>
        <position position="115"/>
    </location>
    <ligand>
        <name>ATP</name>
        <dbReference type="ChEBI" id="CHEBI:30616"/>
    </ligand>
</feature>
<feature type="binding site" evidence="1">
    <location>
        <position position="117"/>
    </location>
    <ligand>
        <name>L-aspartate</name>
        <dbReference type="ChEBI" id="CHEBI:29991"/>
    </ligand>
</feature>
<feature type="binding site" evidence="1">
    <location>
        <position position="121"/>
    </location>
    <ligand>
        <name>L-aspartate</name>
        <dbReference type="ChEBI" id="CHEBI:29991"/>
    </ligand>
</feature>
<feature type="binding site" evidence="1">
    <location>
        <position position="121"/>
    </location>
    <ligand>
        <name>L-citrulline</name>
        <dbReference type="ChEBI" id="CHEBI:57743"/>
    </ligand>
</feature>
<feature type="binding site" evidence="1">
    <location>
        <position position="122"/>
    </location>
    <ligand>
        <name>L-aspartate</name>
        <dbReference type="ChEBI" id="CHEBI:29991"/>
    </ligand>
</feature>
<feature type="binding site" evidence="1">
    <location>
        <position position="125"/>
    </location>
    <ligand>
        <name>L-citrulline</name>
        <dbReference type="ChEBI" id="CHEBI:57743"/>
    </ligand>
</feature>
<feature type="binding site" evidence="1">
    <location>
        <position position="173"/>
    </location>
    <ligand>
        <name>L-citrulline</name>
        <dbReference type="ChEBI" id="CHEBI:57743"/>
    </ligand>
</feature>
<feature type="binding site" evidence="1">
    <location>
        <position position="258"/>
    </location>
    <ligand>
        <name>L-citrulline</name>
        <dbReference type="ChEBI" id="CHEBI:57743"/>
    </ligand>
</feature>
<feature type="binding site" evidence="1">
    <location>
        <position position="270"/>
    </location>
    <ligand>
        <name>L-citrulline</name>
        <dbReference type="ChEBI" id="CHEBI:57743"/>
    </ligand>
</feature>
<accession>A6U068</accession>
<gene>
    <name evidence="1" type="primary">argG</name>
    <name type="ordered locus">SaurJH1_0980</name>
</gene>
<dbReference type="EC" id="6.3.4.5" evidence="1"/>
<dbReference type="EMBL" id="CP000736">
    <property type="protein sequence ID" value="ABR51836.1"/>
    <property type="molecule type" value="Genomic_DNA"/>
</dbReference>
<dbReference type="SMR" id="A6U068"/>
<dbReference type="KEGG" id="sah:SaurJH1_0980"/>
<dbReference type="HOGENOM" id="CLU_032784_4_2_9"/>
<dbReference type="UniPathway" id="UPA00068">
    <property type="reaction ID" value="UER00113"/>
</dbReference>
<dbReference type="GO" id="GO:0005737">
    <property type="term" value="C:cytoplasm"/>
    <property type="evidence" value="ECO:0007669"/>
    <property type="project" value="UniProtKB-SubCell"/>
</dbReference>
<dbReference type="GO" id="GO:0004055">
    <property type="term" value="F:argininosuccinate synthase activity"/>
    <property type="evidence" value="ECO:0007669"/>
    <property type="project" value="UniProtKB-UniRule"/>
</dbReference>
<dbReference type="GO" id="GO:0005524">
    <property type="term" value="F:ATP binding"/>
    <property type="evidence" value="ECO:0007669"/>
    <property type="project" value="UniProtKB-UniRule"/>
</dbReference>
<dbReference type="GO" id="GO:0000053">
    <property type="term" value="P:argininosuccinate metabolic process"/>
    <property type="evidence" value="ECO:0007669"/>
    <property type="project" value="TreeGrafter"/>
</dbReference>
<dbReference type="GO" id="GO:0006526">
    <property type="term" value="P:L-arginine biosynthetic process"/>
    <property type="evidence" value="ECO:0007669"/>
    <property type="project" value="UniProtKB-UniRule"/>
</dbReference>
<dbReference type="GO" id="GO:0000050">
    <property type="term" value="P:urea cycle"/>
    <property type="evidence" value="ECO:0007669"/>
    <property type="project" value="TreeGrafter"/>
</dbReference>
<dbReference type="CDD" id="cd01999">
    <property type="entry name" value="ASS"/>
    <property type="match status" value="1"/>
</dbReference>
<dbReference type="FunFam" id="1.20.5.470:FF:000002">
    <property type="entry name" value="Argininosuccinate synthase"/>
    <property type="match status" value="1"/>
</dbReference>
<dbReference type="FunFam" id="3.40.50.620:FF:000038">
    <property type="entry name" value="Argininosuccinate synthase"/>
    <property type="match status" value="1"/>
</dbReference>
<dbReference type="FunFam" id="3.90.1260.10:FF:000007">
    <property type="entry name" value="Argininosuccinate synthase"/>
    <property type="match status" value="1"/>
</dbReference>
<dbReference type="Gene3D" id="3.90.1260.10">
    <property type="entry name" value="Argininosuccinate synthetase, chain A, domain 2"/>
    <property type="match status" value="1"/>
</dbReference>
<dbReference type="Gene3D" id="3.40.50.620">
    <property type="entry name" value="HUPs"/>
    <property type="match status" value="1"/>
</dbReference>
<dbReference type="Gene3D" id="1.20.5.470">
    <property type="entry name" value="Single helix bin"/>
    <property type="match status" value="1"/>
</dbReference>
<dbReference type="HAMAP" id="MF_00005">
    <property type="entry name" value="Arg_succ_synth_type1"/>
    <property type="match status" value="1"/>
</dbReference>
<dbReference type="InterPro" id="IPR048268">
    <property type="entry name" value="Arginosuc_syn_C"/>
</dbReference>
<dbReference type="InterPro" id="IPR048267">
    <property type="entry name" value="Arginosuc_syn_N"/>
</dbReference>
<dbReference type="InterPro" id="IPR001518">
    <property type="entry name" value="Arginosuc_synth"/>
</dbReference>
<dbReference type="InterPro" id="IPR018223">
    <property type="entry name" value="Arginosuc_synth_CS"/>
</dbReference>
<dbReference type="InterPro" id="IPR023434">
    <property type="entry name" value="Arginosuc_synth_type_1_subfam"/>
</dbReference>
<dbReference type="InterPro" id="IPR024074">
    <property type="entry name" value="AS_cat/multimer_dom_body"/>
</dbReference>
<dbReference type="InterPro" id="IPR014729">
    <property type="entry name" value="Rossmann-like_a/b/a_fold"/>
</dbReference>
<dbReference type="NCBIfam" id="TIGR00032">
    <property type="entry name" value="argG"/>
    <property type="match status" value="1"/>
</dbReference>
<dbReference type="NCBIfam" id="NF001770">
    <property type="entry name" value="PRK00509.1"/>
    <property type="match status" value="1"/>
</dbReference>
<dbReference type="PANTHER" id="PTHR11587">
    <property type="entry name" value="ARGININOSUCCINATE SYNTHASE"/>
    <property type="match status" value="1"/>
</dbReference>
<dbReference type="PANTHER" id="PTHR11587:SF2">
    <property type="entry name" value="ARGININOSUCCINATE SYNTHASE"/>
    <property type="match status" value="1"/>
</dbReference>
<dbReference type="Pfam" id="PF20979">
    <property type="entry name" value="Arginosuc_syn_C"/>
    <property type="match status" value="1"/>
</dbReference>
<dbReference type="Pfam" id="PF00764">
    <property type="entry name" value="Arginosuc_synth"/>
    <property type="match status" value="1"/>
</dbReference>
<dbReference type="SUPFAM" id="SSF52402">
    <property type="entry name" value="Adenine nucleotide alpha hydrolases-like"/>
    <property type="match status" value="1"/>
</dbReference>
<dbReference type="SUPFAM" id="SSF69864">
    <property type="entry name" value="Argininosuccinate synthetase, C-terminal domain"/>
    <property type="match status" value="1"/>
</dbReference>
<dbReference type="PROSITE" id="PS00564">
    <property type="entry name" value="ARGININOSUCCIN_SYN_1"/>
    <property type="match status" value="1"/>
</dbReference>
<dbReference type="PROSITE" id="PS00565">
    <property type="entry name" value="ARGININOSUCCIN_SYN_2"/>
    <property type="match status" value="1"/>
</dbReference>